<evidence type="ECO:0000255" key="1">
    <source>
        <dbReference type="HAMAP-Rule" id="MF_00823"/>
    </source>
</evidence>
<evidence type="ECO:0000255" key="2">
    <source>
        <dbReference type="PROSITE-ProRule" id="PRU01137"/>
    </source>
</evidence>
<sequence length="319" mass="35572">MSLNFLEFEKPIAELEAKIEALRDVSRHGGDSAIDLDKEIEQLEKKSLELKKKIFSDLGAWETAQLARHPQRPYTLDYVKHVFEEFDELAGDRAYADDKAIVAGIARLEGRPVMIIGHQKGRETREKVKRNFGMPKPEGYRKALRLMKMAERFQMPIITFIDTAGAYPGVGAEERGQSEAIATNLKEMAGLTVPVICNVVGEGGSGGALAIGVGDYVNMLQYSTYSVISPEGCASILWRDSDKAPQAAEAMGLVASRLKELELIDEIIEEPLGGAHRNHVQMAANMKATLLRQLAELEQFPQDVLLERRYQRLMNYGYC</sequence>
<reference key="1">
    <citation type="submission" date="2002-12" db="EMBL/GenBank/DDBJ databases">
        <title>Complete genome sequence of Vibrio vulnificus CMCP6.</title>
        <authorList>
            <person name="Rhee J.H."/>
            <person name="Kim S.Y."/>
            <person name="Chung S.S."/>
            <person name="Kim J.J."/>
            <person name="Moon Y.H."/>
            <person name="Jeong H."/>
            <person name="Choy H.E."/>
        </authorList>
    </citation>
    <scope>NUCLEOTIDE SEQUENCE [LARGE SCALE GENOMIC DNA]</scope>
    <source>
        <strain>CMCP6</strain>
    </source>
</reference>
<keyword id="KW-0067">ATP-binding</keyword>
<keyword id="KW-0963">Cytoplasm</keyword>
<keyword id="KW-0275">Fatty acid biosynthesis</keyword>
<keyword id="KW-0276">Fatty acid metabolism</keyword>
<keyword id="KW-0444">Lipid biosynthesis</keyword>
<keyword id="KW-0443">Lipid metabolism</keyword>
<keyword id="KW-0547">Nucleotide-binding</keyword>
<keyword id="KW-0808">Transferase</keyword>
<protein>
    <recommendedName>
        <fullName evidence="1">Acetyl-coenzyme A carboxylase carboxyl transferase subunit alpha</fullName>
        <shortName evidence="1">ACCase subunit alpha</shortName>
        <shortName evidence="1">Acetyl-CoA carboxylase carboxyltransferase subunit alpha</shortName>
        <ecNumber evidence="1">2.1.3.15</ecNumber>
    </recommendedName>
</protein>
<name>ACCA_VIBVU</name>
<accession>Q8DBE5</accession>
<gene>
    <name evidence="1" type="primary">accA</name>
    <name type="ordered locus">VV1_1876</name>
</gene>
<organism>
    <name type="scientific">Vibrio vulnificus (strain CMCP6)</name>
    <dbReference type="NCBI Taxonomy" id="216895"/>
    <lineage>
        <taxon>Bacteria</taxon>
        <taxon>Pseudomonadati</taxon>
        <taxon>Pseudomonadota</taxon>
        <taxon>Gammaproteobacteria</taxon>
        <taxon>Vibrionales</taxon>
        <taxon>Vibrionaceae</taxon>
        <taxon>Vibrio</taxon>
    </lineage>
</organism>
<feature type="chain" id="PRO_0000223850" description="Acetyl-coenzyme A carboxylase carboxyl transferase subunit alpha">
    <location>
        <begin position="1"/>
        <end position="319"/>
    </location>
</feature>
<feature type="domain" description="CoA carboxyltransferase C-terminal" evidence="2">
    <location>
        <begin position="35"/>
        <end position="296"/>
    </location>
</feature>
<proteinExistence type="inferred from homology"/>
<dbReference type="EC" id="2.1.3.15" evidence="1"/>
<dbReference type="EMBL" id="AE016795">
    <property type="protein sequence ID" value="AAO10278.1"/>
    <property type="molecule type" value="Genomic_DNA"/>
</dbReference>
<dbReference type="RefSeq" id="WP_011079778.1">
    <property type="nucleotide sequence ID" value="NC_004459.3"/>
</dbReference>
<dbReference type="SMR" id="Q8DBE5"/>
<dbReference type="GeneID" id="93896103"/>
<dbReference type="KEGG" id="vvu:VV1_1876"/>
<dbReference type="HOGENOM" id="CLU_015486_0_2_6"/>
<dbReference type="UniPathway" id="UPA00655">
    <property type="reaction ID" value="UER00711"/>
</dbReference>
<dbReference type="Proteomes" id="UP000002275">
    <property type="component" value="Chromosome 1"/>
</dbReference>
<dbReference type="GO" id="GO:0009317">
    <property type="term" value="C:acetyl-CoA carboxylase complex"/>
    <property type="evidence" value="ECO:0007669"/>
    <property type="project" value="InterPro"/>
</dbReference>
<dbReference type="GO" id="GO:0003989">
    <property type="term" value="F:acetyl-CoA carboxylase activity"/>
    <property type="evidence" value="ECO:0007669"/>
    <property type="project" value="InterPro"/>
</dbReference>
<dbReference type="GO" id="GO:0005524">
    <property type="term" value="F:ATP binding"/>
    <property type="evidence" value="ECO:0007669"/>
    <property type="project" value="UniProtKB-KW"/>
</dbReference>
<dbReference type="GO" id="GO:0016743">
    <property type="term" value="F:carboxyl- or carbamoyltransferase activity"/>
    <property type="evidence" value="ECO:0007669"/>
    <property type="project" value="UniProtKB-UniRule"/>
</dbReference>
<dbReference type="GO" id="GO:0006633">
    <property type="term" value="P:fatty acid biosynthetic process"/>
    <property type="evidence" value="ECO:0007669"/>
    <property type="project" value="UniProtKB-KW"/>
</dbReference>
<dbReference type="GO" id="GO:2001295">
    <property type="term" value="P:malonyl-CoA biosynthetic process"/>
    <property type="evidence" value="ECO:0007669"/>
    <property type="project" value="UniProtKB-UniRule"/>
</dbReference>
<dbReference type="FunFam" id="3.90.226.10:FF:000008">
    <property type="entry name" value="Acetyl-coenzyme A carboxylase carboxyl transferase subunit alpha"/>
    <property type="match status" value="1"/>
</dbReference>
<dbReference type="Gene3D" id="3.90.226.10">
    <property type="entry name" value="2-enoyl-CoA Hydratase, Chain A, domain 1"/>
    <property type="match status" value="1"/>
</dbReference>
<dbReference type="HAMAP" id="MF_00823">
    <property type="entry name" value="AcetylCoA_CT_alpha"/>
    <property type="match status" value="1"/>
</dbReference>
<dbReference type="InterPro" id="IPR001095">
    <property type="entry name" value="Acetyl_CoA_COase_a_su"/>
</dbReference>
<dbReference type="InterPro" id="IPR029045">
    <property type="entry name" value="ClpP/crotonase-like_dom_sf"/>
</dbReference>
<dbReference type="InterPro" id="IPR011763">
    <property type="entry name" value="COA_CT_C"/>
</dbReference>
<dbReference type="NCBIfam" id="TIGR00513">
    <property type="entry name" value="accA"/>
    <property type="match status" value="1"/>
</dbReference>
<dbReference type="NCBIfam" id="NF041504">
    <property type="entry name" value="AccA_sub"/>
    <property type="match status" value="1"/>
</dbReference>
<dbReference type="NCBIfam" id="NF004344">
    <property type="entry name" value="PRK05724.1"/>
    <property type="match status" value="1"/>
</dbReference>
<dbReference type="PANTHER" id="PTHR42853">
    <property type="entry name" value="ACETYL-COENZYME A CARBOXYLASE CARBOXYL TRANSFERASE SUBUNIT ALPHA"/>
    <property type="match status" value="1"/>
</dbReference>
<dbReference type="PANTHER" id="PTHR42853:SF3">
    <property type="entry name" value="ACETYL-COENZYME A CARBOXYLASE CARBOXYL TRANSFERASE SUBUNIT ALPHA, CHLOROPLASTIC"/>
    <property type="match status" value="1"/>
</dbReference>
<dbReference type="Pfam" id="PF03255">
    <property type="entry name" value="ACCA"/>
    <property type="match status" value="1"/>
</dbReference>
<dbReference type="PRINTS" id="PR01069">
    <property type="entry name" value="ACCCTRFRASEA"/>
</dbReference>
<dbReference type="SUPFAM" id="SSF52096">
    <property type="entry name" value="ClpP/crotonase"/>
    <property type="match status" value="1"/>
</dbReference>
<dbReference type="PROSITE" id="PS50989">
    <property type="entry name" value="COA_CT_CTER"/>
    <property type="match status" value="1"/>
</dbReference>
<comment type="function">
    <text evidence="1">Component of the acetyl coenzyme A carboxylase (ACC) complex. First, biotin carboxylase catalyzes the carboxylation of biotin on its carrier protein (BCCP) and then the CO(2) group is transferred by the carboxyltransferase to acetyl-CoA to form malonyl-CoA.</text>
</comment>
<comment type="catalytic activity">
    <reaction evidence="1">
        <text>N(6)-carboxybiotinyl-L-lysyl-[protein] + acetyl-CoA = N(6)-biotinyl-L-lysyl-[protein] + malonyl-CoA</text>
        <dbReference type="Rhea" id="RHEA:54728"/>
        <dbReference type="Rhea" id="RHEA-COMP:10505"/>
        <dbReference type="Rhea" id="RHEA-COMP:10506"/>
        <dbReference type="ChEBI" id="CHEBI:57288"/>
        <dbReference type="ChEBI" id="CHEBI:57384"/>
        <dbReference type="ChEBI" id="CHEBI:83144"/>
        <dbReference type="ChEBI" id="CHEBI:83145"/>
        <dbReference type="EC" id="2.1.3.15"/>
    </reaction>
</comment>
<comment type="pathway">
    <text evidence="1">Lipid metabolism; malonyl-CoA biosynthesis; malonyl-CoA from acetyl-CoA: step 1/1.</text>
</comment>
<comment type="subunit">
    <text evidence="1">Acetyl-CoA carboxylase is a heterohexamer composed of biotin carboxyl carrier protein (AccB), biotin carboxylase (AccC) and two subunits each of ACCase subunit alpha (AccA) and ACCase subunit beta (AccD).</text>
</comment>
<comment type="subcellular location">
    <subcellularLocation>
        <location evidence="1">Cytoplasm</location>
    </subcellularLocation>
</comment>
<comment type="similarity">
    <text evidence="1">Belongs to the AccA family.</text>
</comment>